<accession>O73775</accession>
<accession>O73774</accession>
<proteinExistence type="evidence at transcript level"/>
<protein>
    <recommendedName>
        <fullName>Fibulin-1</fullName>
        <shortName>FIBL-1</shortName>
    </recommendedName>
</protein>
<organism>
    <name type="scientific">Gallus gallus</name>
    <name type="common">Chicken</name>
    <dbReference type="NCBI Taxonomy" id="9031"/>
    <lineage>
        <taxon>Eukaryota</taxon>
        <taxon>Metazoa</taxon>
        <taxon>Chordata</taxon>
        <taxon>Craniata</taxon>
        <taxon>Vertebrata</taxon>
        <taxon>Euteleostomi</taxon>
        <taxon>Archelosauria</taxon>
        <taxon>Archosauria</taxon>
        <taxon>Dinosauria</taxon>
        <taxon>Saurischia</taxon>
        <taxon>Theropoda</taxon>
        <taxon>Coelurosauria</taxon>
        <taxon>Aves</taxon>
        <taxon>Neognathae</taxon>
        <taxon>Galloanserae</taxon>
        <taxon>Galliformes</taxon>
        <taxon>Phasianidae</taxon>
        <taxon>Phasianinae</taxon>
        <taxon>Gallus</taxon>
    </lineage>
</organism>
<dbReference type="EMBL" id="AF051399">
    <property type="protein sequence ID" value="AAC05387.1"/>
    <property type="molecule type" value="mRNA"/>
</dbReference>
<dbReference type="EMBL" id="AF051400">
    <property type="protein sequence ID" value="AAC05388.1"/>
    <property type="molecule type" value="mRNA"/>
</dbReference>
<dbReference type="RefSeq" id="NP_989496.1">
    <molecule id="O73775-2"/>
    <property type="nucleotide sequence ID" value="NM_204165.1"/>
</dbReference>
<dbReference type="FunCoup" id="O73775">
    <property type="interactions" value="1760"/>
</dbReference>
<dbReference type="STRING" id="9031.ENSGALP00000022972"/>
<dbReference type="GlyCosmos" id="O73775">
    <property type="glycosylation" value="3 sites, No reported glycans"/>
</dbReference>
<dbReference type="GlyGen" id="O73775">
    <property type="glycosylation" value="3 sites"/>
</dbReference>
<dbReference type="PaxDb" id="9031-ENSGALP00000022972"/>
<dbReference type="GeneID" id="373979"/>
<dbReference type="KEGG" id="gga:373979"/>
<dbReference type="CTD" id="2192"/>
<dbReference type="VEuPathDB" id="HostDB:geneid_373979"/>
<dbReference type="eggNOG" id="KOG1217">
    <property type="taxonomic scope" value="Eukaryota"/>
</dbReference>
<dbReference type="InParanoid" id="O73775"/>
<dbReference type="OrthoDB" id="4062651at2759"/>
<dbReference type="PhylomeDB" id="O73775"/>
<dbReference type="PRO" id="PR:O73775"/>
<dbReference type="Proteomes" id="UP000000539">
    <property type="component" value="Unassembled WGS sequence"/>
</dbReference>
<dbReference type="GO" id="GO:0005576">
    <property type="term" value="C:extracellular region"/>
    <property type="evidence" value="ECO:0007669"/>
    <property type="project" value="UniProtKB-KW"/>
</dbReference>
<dbReference type="GO" id="GO:0005509">
    <property type="term" value="F:calcium ion binding"/>
    <property type="evidence" value="ECO:0007669"/>
    <property type="project" value="InterPro"/>
</dbReference>
<dbReference type="GO" id="GO:0016504">
    <property type="term" value="F:peptidase activator activity"/>
    <property type="evidence" value="ECO:0007669"/>
    <property type="project" value="InterPro"/>
</dbReference>
<dbReference type="GO" id="GO:0030198">
    <property type="term" value="P:extracellular matrix organization"/>
    <property type="evidence" value="ECO:0007669"/>
    <property type="project" value="InterPro"/>
</dbReference>
<dbReference type="CDD" id="cd00017">
    <property type="entry name" value="ANATO"/>
    <property type="match status" value="1"/>
</dbReference>
<dbReference type="CDD" id="cd00054">
    <property type="entry name" value="EGF_CA"/>
    <property type="match status" value="4"/>
</dbReference>
<dbReference type="FunFam" id="2.10.25.10:FF:000341">
    <property type="entry name" value="Fibulin 2"/>
    <property type="match status" value="1"/>
</dbReference>
<dbReference type="FunFam" id="2.10.25.10:FF:000078">
    <property type="entry name" value="Fibulin-1"/>
    <property type="match status" value="1"/>
</dbReference>
<dbReference type="FunFam" id="2.10.25.10:FF:000104">
    <property type="entry name" value="Fibulin-1"/>
    <property type="match status" value="1"/>
</dbReference>
<dbReference type="FunFam" id="2.10.25.10:FF:000108">
    <property type="entry name" value="Fibulin-1"/>
    <property type="match status" value="1"/>
</dbReference>
<dbReference type="FunFam" id="2.10.25.10:FF:000139">
    <property type="entry name" value="Fibulin-1"/>
    <property type="match status" value="1"/>
</dbReference>
<dbReference type="FunFam" id="2.10.25.10:FF:000150">
    <property type="entry name" value="Fibulin-1"/>
    <property type="match status" value="1"/>
</dbReference>
<dbReference type="FunFam" id="2.10.25.10:FF:000241">
    <property type="entry name" value="Fibulin-1"/>
    <property type="match status" value="1"/>
</dbReference>
<dbReference type="FunFam" id="2.10.25.10:FF:000257">
    <property type="entry name" value="Fibulin-1"/>
    <property type="match status" value="1"/>
</dbReference>
<dbReference type="FunFam" id="2.10.25.10:FF:000010">
    <property type="entry name" value="Pro-epidermal growth factor"/>
    <property type="match status" value="1"/>
</dbReference>
<dbReference type="Gene3D" id="2.10.25.10">
    <property type="entry name" value="Laminin"/>
    <property type="match status" value="9"/>
</dbReference>
<dbReference type="InterPro" id="IPR000020">
    <property type="entry name" value="Anaphylatoxin/fibulin"/>
</dbReference>
<dbReference type="InterPro" id="IPR026823">
    <property type="entry name" value="cEGF"/>
</dbReference>
<dbReference type="InterPro" id="IPR001881">
    <property type="entry name" value="EGF-like_Ca-bd_dom"/>
</dbReference>
<dbReference type="InterPro" id="IPR000742">
    <property type="entry name" value="EGF-like_dom"/>
</dbReference>
<dbReference type="InterPro" id="IPR000152">
    <property type="entry name" value="EGF-type_Asp/Asn_hydroxyl_site"/>
</dbReference>
<dbReference type="InterPro" id="IPR018097">
    <property type="entry name" value="EGF_Ca-bd_CS"/>
</dbReference>
<dbReference type="InterPro" id="IPR017048">
    <property type="entry name" value="Fibulin-1"/>
</dbReference>
<dbReference type="InterPro" id="IPR055088">
    <property type="entry name" value="Fibulin_C"/>
</dbReference>
<dbReference type="InterPro" id="IPR009030">
    <property type="entry name" value="Growth_fac_rcpt_cys_sf"/>
</dbReference>
<dbReference type="InterPro" id="IPR052235">
    <property type="entry name" value="Nephronectin_domain"/>
</dbReference>
<dbReference type="InterPro" id="IPR049883">
    <property type="entry name" value="NOTCH1_EGF-like"/>
</dbReference>
<dbReference type="PANTHER" id="PTHR24050:SF29">
    <property type="entry name" value="FIBULIN-1"/>
    <property type="match status" value="1"/>
</dbReference>
<dbReference type="PANTHER" id="PTHR24050">
    <property type="entry name" value="PA14 DOMAIN-CONTAINING PROTEIN"/>
    <property type="match status" value="1"/>
</dbReference>
<dbReference type="Pfam" id="PF01821">
    <property type="entry name" value="ANATO"/>
    <property type="match status" value="1"/>
</dbReference>
<dbReference type="Pfam" id="PF12662">
    <property type="entry name" value="cEGF"/>
    <property type="match status" value="3"/>
</dbReference>
<dbReference type="Pfam" id="PF07645">
    <property type="entry name" value="EGF_CA"/>
    <property type="match status" value="4"/>
</dbReference>
<dbReference type="Pfam" id="PF22914">
    <property type="entry name" value="Fibulin_C"/>
    <property type="match status" value="1"/>
</dbReference>
<dbReference type="PIRSF" id="PIRSF036313">
    <property type="entry name" value="Fibulin-1"/>
    <property type="match status" value="1"/>
</dbReference>
<dbReference type="SMART" id="SM00104">
    <property type="entry name" value="ANATO"/>
    <property type="match status" value="3"/>
</dbReference>
<dbReference type="SMART" id="SM00181">
    <property type="entry name" value="EGF"/>
    <property type="match status" value="9"/>
</dbReference>
<dbReference type="SMART" id="SM00179">
    <property type="entry name" value="EGF_CA"/>
    <property type="match status" value="9"/>
</dbReference>
<dbReference type="SUPFAM" id="SSF57196">
    <property type="entry name" value="EGF/Laminin"/>
    <property type="match status" value="3"/>
</dbReference>
<dbReference type="SUPFAM" id="SSF57184">
    <property type="entry name" value="Growth factor receptor domain"/>
    <property type="match status" value="2"/>
</dbReference>
<dbReference type="PROSITE" id="PS01177">
    <property type="entry name" value="ANAPHYLATOXIN_1"/>
    <property type="match status" value="1"/>
</dbReference>
<dbReference type="PROSITE" id="PS01178">
    <property type="entry name" value="ANAPHYLATOXIN_2"/>
    <property type="match status" value="2"/>
</dbReference>
<dbReference type="PROSITE" id="PS00010">
    <property type="entry name" value="ASX_HYDROXYL"/>
    <property type="match status" value="5"/>
</dbReference>
<dbReference type="PROSITE" id="PS01186">
    <property type="entry name" value="EGF_2"/>
    <property type="match status" value="3"/>
</dbReference>
<dbReference type="PROSITE" id="PS50026">
    <property type="entry name" value="EGF_3"/>
    <property type="match status" value="5"/>
</dbReference>
<dbReference type="PROSITE" id="PS01187">
    <property type="entry name" value="EGF_CA"/>
    <property type="match status" value="8"/>
</dbReference>
<keyword id="KW-0025">Alternative splicing</keyword>
<keyword id="KW-0106">Calcium</keyword>
<keyword id="KW-1015">Disulfide bond</keyword>
<keyword id="KW-0245">EGF-like domain</keyword>
<keyword id="KW-0272">Extracellular matrix</keyword>
<keyword id="KW-0325">Glycoprotein</keyword>
<keyword id="KW-1185">Reference proteome</keyword>
<keyword id="KW-0677">Repeat</keyword>
<keyword id="KW-0964">Secreted</keyword>
<keyword id="KW-0732">Signal</keyword>
<name>FBLN1_CHICK</name>
<sequence length="704" mass="78138">MDKLRGARPLRLLLLLLALLPALRGQDLSMEECCDKGVEWANKNRICTSLPLISESRECSMTQVQCCRSKLEEHYCSDGIEFASVHEECDSHNGENSTCEAEYFKKCCYCCLLGKTAQVQGQSCEPNLKIGYQCGIVFRACCVKGQEGTDVSISDDAPKKEQVEISKEELDQEDPYLHDGCRGGGPCSQQCRDTGSSYVCSCFVGYQLQPDGVNCEDINECITGTHSCGIGQTCVNTLGSFRCQRDTSCGTGYELTDDSRCKDIDECETGTHNCPPDFICQNTPGSFRCRPKLQCMNGFIQDALGNCIDINECLSTNMPCPAGQICINTDGSYTCQRISPSCGRGYHLNEDGTRCVDVDECSSSDQPCGEGHVCINGPGNYRCECKSGYSFDVISRTCIDINECRRYPGRLCAHKCENTPGSYYCTCTMGFKLSSDGRSCEDLNECESSPCSQECANVYGSYQCYCRRGFQLSDIDGISCEDIDECALPTGGHICSFRCINIPGSFQCTCPSTGYRLAPNARNCQDIDECVAETHNCSFNETCFNIQGGFRCLSLECPENYRKSGDTVRLEKTDTIRCIKSCRPNDVNCVLDPVHTISHTVISLPTFREFTRPEEIIFLRAITPTYPANQADIIFDITEGNLRESFDIIKRYMDGMTVGVVRQVRPIVGPFHAILKLEMNYVMGGVVSHRNIVNVHIFVSEYWF</sequence>
<reference key="1">
    <citation type="journal article" date="1998" name="Matrix Biol.">
        <title>Identification of chicken and C. elegans fibulin-1 homologs and characterization of the C. elegans fibulin-1 gene.</title>
        <authorList>
            <person name="Barth J.L."/>
            <person name="Argraves K.M."/>
            <person name="Roark E.F."/>
            <person name="Little C.D."/>
            <person name="Argraves W.S."/>
        </authorList>
    </citation>
    <scope>NUCLEOTIDE SEQUENCE [MRNA] (ISOFORMS C AND D)</scope>
    <source>
        <tissue>Embryo</tissue>
    </source>
</reference>
<evidence type="ECO:0000250" key="1"/>
<evidence type="ECO:0000255" key="2"/>
<evidence type="ECO:0000255" key="3">
    <source>
        <dbReference type="PROSITE-ProRule" id="PRU00022"/>
    </source>
</evidence>
<evidence type="ECO:0000255" key="4">
    <source>
        <dbReference type="PROSITE-ProRule" id="PRU00076"/>
    </source>
</evidence>
<evidence type="ECO:0000303" key="5">
    <source>
    </source>
</evidence>
<evidence type="ECO:0000305" key="6"/>
<gene>
    <name type="primary">FBLN1</name>
</gene>
<comment type="function">
    <text>Incorporated into fibronectin-containing matrix fibers. May play a role in cell adhesion and migration along protein fibers within the extracellular matrix (ECM). Could be important for certain developmental processes and contribute to the supramolecular organization of ECM architecture, in particular to those of basement membranes.</text>
</comment>
<comment type="subunit">
    <text evidence="1">Homomultimerizes and interacts with various extracellular matrix components.</text>
</comment>
<comment type="subcellular location">
    <subcellularLocation>
        <location>Secreted</location>
        <location>Extracellular space</location>
        <location>Extracellular matrix</location>
    </subcellularLocation>
</comment>
<comment type="alternative products">
    <event type="alternative splicing"/>
    <isoform>
        <id>O73775-2</id>
        <name>D</name>
        <sequence type="displayed"/>
    </isoform>
    <isoform>
        <id>O73775-1</id>
        <name>C</name>
        <sequence type="described" ref="VSP_007378"/>
    </isoform>
</comment>
<comment type="similarity">
    <text evidence="6">Belongs to the fibulin family.</text>
</comment>
<feature type="signal peptide" evidence="2">
    <location>
        <begin position="1"/>
        <end position="25"/>
    </location>
</feature>
<feature type="chain" id="PRO_0000007565" description="Fibulin-1">
    <location>
        <begin position="26"/>
        <end position="704"/>
    </location>
</feature>
<feature type="domain" description="Anaphylatoxin-like 1" evidence="3">
    <location>
        <begin position="33"/>
        <end position="74"/>
    </location>
</feature>
<feature type="domain" description="Anaphylatoxin-like 2" evidence="3">
    <location>
        <begin position="75"/>
        <end position="109"/>
    </location>
</feature>
<feature type="domain" description="Anaphylatoxin-like 3" evidence="3">
    <location>
        <begin position="110"/>
        <end position="142"/>
    </location>
</feature>
<feature type="domain" description="EGF-like 1" evidence="4">
    <location>
        <begin position="177"/>
        <end position="216"/>
    </location>
</feature>
<feature type="domain" description="EGF-like 2; calcium-binding" evidence="4">
    <location>
        <begin position="217"/>
        <end position="262"/>
    </location>
</feature>
<feature type="domain" description="EGF-like 3; calcium-binding" evidence="4">
    <location>
        <begin position="263"/>
        <end position="308"/>
    </location>
</feature>
<feature type="domain" description="EGF-like 4; calcium-binding" evidence="4">
    <location>
        <begin position="309"/>
        <end position="356"/>
    </location>
</feature>
<feature type="domain" description="EGF-like 5; calcium-binding" evidence="4">
    <location>
        <begin position="357"/>
        <end position="399"/>
    </location>
</feature>
<feature type="domain" description="EGF-like 6; calcium-binding" evidence="4">
    <location>
        <begin position="400"/>
        <end position="441"/>
    </location>
</feature>
<feature type="domain" description="EGF-like 7; calcium-binding" evidence="4">
    <location>
        <begin position="442"/>
        <end position="481"/>
    </location>
</feature>
<feature type="domain" description="EGF-like 8; calcium-binding" evidence="4">
    <location>
        <begin position="482"/>
        <end position="525"/>
    </location>
</feature>
<feature type="domain" description="EGF-like 9; calcium-binding" evidence="4">
    <location>
        <begin position="526"/>
        <end position="579"/>
    </location>
</feature>
<feature type="region of interest" description="Self-association and FN1-binding" evidence="1">
    <location>
        <begin position="357"/>
        <end position="441"/>
    </location>
</feature>
<feature type="glycosylation site" description="N-linked (GlcNAc...) asparagine" evidence="2">
    <location>
        <position position="96"/>
    </location>
</feature>
<feature type="glycosylation site" description="N-linked (GlcNAc...) asparagine" evidence="2">
    <location>
        <position position="536"/>
    </location>
</feature>
<feature type="glycosylation site" description="N-linked (GlcNAc...) asparagine" evidence="2">
    <location>
        <position position="540"/>
    </location>
</feature>
<feature type="disulfide bond" evidence="1">
    <location>
        <begin position="33"/>
        <end position="59"/>
    </location>
</feature>
<feature type="disulfide bond" evidence="1">
    <location>
        <begin position="34"/>
        <end position="66"/>
    </location>
</feature>
<feature type="disulfide bond" evidence="1">
    <location>
        <begin position="47"/>
        <end position="67"/>
    </location>
</feature>
<feature type="disulfide bond" evidence="1">
    <location>
        <begin position="76"/>
        <end position="107"/>
    </location>
</feature>
<feature type="disulfide bond" evidence="1">
    <location>
        <begin position="89"/>
        <end position="108"/>
    </location>
</feature>
<feature type="disulfide bond" evidence="1">
    <location>
        <begin position="110"/>
        <end position="134"/>
    </location>
</feature>
<feature type="disulfide bond" evidence="1">
    <location>
        <begin position="111"/>
        <end position="141"/>
    </location>
</feature>
<feature type="disulfide bond" evidence="1">
    <location>
        <begin position="124"/>
        <end position="142"/>
    </location>
</feature>
<feature type="disulfide bond" evidence="1">
    <location>
        <begin position="181"/>
        <end position="191"/>
    </location>
</feature>
<feature type="disulfide bond" evidence="1">
    <location>
        <begin position="187"/>
        <end position="200"/>
    </location>
</feature>
<feature type="disulfide bond" evidence="1">
    <location>
        <begin position="202"/>
        <end position="215"/>
    </location>
</feature>
<feature type="disulfide bond" evidence="1">
    <location>
        <begin position="221"/>
        <end position="234"/>
    </location>
</feature>
<feature type="disulfide bond" evidence="1">
    <location>
        <begin position="228"/>
        <end position="243"/>
    </location>
</feature>
<feature type="disulfide bond" evidence="1">
    <location>
        <begin position="249"/>
        <end position="261"/>
    </location>
</feature>
<feature type="disulfide bond" evidence="1">
    <location>
        <begin position="267"/>
        <end position="280"/>
    </location>
</feature>
<feature type="disulfide bond" evidence="1">
    <location>
        <begin position="274"/>
        <end position="289"/>
    </location>
</feature>
<feature type="disulfide bond" evidence="1">
    <location>
        <begin position="295"/>
        <end position="307"/>
    </location>
</feature>
<feature type="disulfide bond" evidence="1">
    <location>
        <begin position="313"/>
        <end position="326"/>
    </location>
</feature>
<feature type="disulfide bond" evidence="1">
    <location>
        <begin position="320"/>
        <end position="335"/>
    </location>
</feature>
<feature type="disulfide bond" evidence="1">
    <location>
        <begin position="342"/>
        <end position="355"/>
    </location>
</feature>
<feature type="disulfide bond" evidence="1">
    <location>
        <begin position="361"/>
        <end position="374"/>
    </location>
</feature>
<feature type="disulfide bond" evidence="1">
    <location>
        <begin position="368"/>
        <end position="383"/>
    </location>
</feature>
<feature type="disulfide bond" evidence="1">
    <location>
        <begin position="385"/>
        <end position="398"/>
    </location>
</feature>
<feature type="disulfide bond" evidence="1">
    <location>
        <begin position="404"/>
        <end position="416"/>
    </location>
</feature>
<feature type="disulfide bond" evidence="1">
    <location>
        <begin position="412"/>
        <end position="425"/>
    </location>
</feature>
<feature type="disulfide bond" evidence="1">
    <location>
        <begin position="427"/>
        <end position="440"/>
    </location>
</feature>
<feature type="disulfide bond" evidence="1">
    <location>
        <begin position="446"/>
        <end position="455"/>
    </location>
</feature>
<feature type="disulfide bond" evidence="1">
    <location>
        <begin position="451"/>
        <end position="464"/>
    </location>
</feature>
<feature type="disulfide bond" evidence="1">
    <location>
        <begin position="466"/>
        <end position="480"/>
    </location>
</feature>
<feature type="disulfide bond" evidence="1">
    <location>
        <begin position="486"/>
        <end position="499"/>
    </location>
</feature>
<feature type="disulfide bond" evidence="1">
    <location>
        <begin position="495"/>
        <end position="508"/>
    </location>
</feature>
<feature type="disulfide bond" evidence="1">
    <location>
        <begin position="510"/>
        <end position="524"/>
    </location>
</feature>
<feature type="disulfide bond" evidence="1">
    <location>
        <begin position="530"/>
        <end position="543"/>
    </location>
</feature>
<feature type="disulfide bond" evidence="1">
    <location>
        <begin position="537"/>
        <end position="552"/>
    </location>
</feature>
<feature type="disulfide bond" evidence="1">
    <location>
        <begin position="557"/>
        <end position="578"/>
    </location>
</feature>
<feature type="splice variant" id="VSP_007378" description="In isoform C." evidence="5">
    <original>VRLEKTDTIRCIKSCRPNDVNCVLDPVHTISHTVISLPTFREFTRPEEIIFLRAITPTYPANQADIIFDITEGNLRESFDIIKRYMDGMTVGVVRQVRPIVGPFHAILKLEMNYVMGGVVSHRNIVNVHIFVSEYWF</original>
    <variation>RCERLPCNENKECQSLPLRITYYHLSFPTNIQVPTDIFRMGPSNAVPGDKILLSIISGNQEGFFTTKKVNNHSGIVVMQRQITEPRDLLLTIQMQLTRHGTVNTFIAKLFVFVSAQL</variation>
    <location>
        <begin position="568"/>
        <end position="704"/>
    </location>
</feature>